<reference key="1">
    <citation type="journal article" date="2001" name="Nature">
        <title>Genome sequence of enterohaemorrhagic Escherichia coli O157:H7.</title>
        <authorList>
            <person name="Perna N.T."/>
            <person name="Plunkett G. III"/>
            <person name="Burland V."/>
            <person name="Mau B."/>
            <person name="Glasner J.D."/>
            <person name="Rose D.J."/>
            <person name="Mayhew G.F."/>
            <person name="Evans P.S."/>
            <person name="Gregor J."/>
            <person name="Kirkpatrick H.A."/>
            <person name="Posfai G."/>
            <person name="Hackett J."/>
            <person name="Klink S."/>
            <person name="Boutin A."/>
            <person name="Shao Y."/>
            <person name="Miller L."/>
            <person name="Grotbeck E.J."/>
            <person name="Davis N.W."/>
            <person name="Lim A."/>
            <person name="Dimalanta E.T."/>
            <person name="Potamousis K."/>
            <person name="Apodaca J."/>
            <person name="Anantharaman T.S."/>
            <person name="Lin J."/>
            <person name="Yen G."/>
            <person name="Schwartz D.C."/>
            <person name="Welch R.A."/>
            <person name="Blattner F.R."/>
        </authorList>
    </citation>
    <scope>NUCLEOTIDE SEQUENCE [LARGE SCALE GENOMIC DNA]</scope>
    <source>
        <strain>O157:H7 / EDL933 / ATCC 700927 / EHEC</strain>
    </source>
</reference>
<reference key="2">
    <citation type="journal article" date="2001" name="DNA Res.">
        <title>Complete genome sequence of enterohemorrhagic Escherichia coli O157:H7 and genomic comparison with a laboratory strain K-12.</title>
        <authorList>
            <person name="Hayashi T."/>
            <person name="Makino K."/>
            <person name="Ohnishi M."/>
            <person name="Kurokawa K."/>
            <person name="Ishii K."/>
            <person name="Yokoyama K."/>
            <person name="Han C.-G."/>
            <person name="Ohtsubo E."/>
            <person name="Nakayama K."/>
            <person name="Murata T."/>
            <person name="Tanaka M."/>
            <person name="Tobe T."/>
            <person name="Iida T."/>
            <person name="Takami H."/>
            <person name="Honda T."/>
            <person name="Sasakawa C."/>
            <person name="Ogasawara N."/>
            <person name="Yasunaga T."/>
            <person name="Kuhara S."/>
            <person name="Shiba T."/>
            <person name="Hattori M."/>
            <person name="Shinagawa H."/>
        </authorList>
    </citation>
    <scope>NUCLEOTIDE SEQUENCE [LARGE SCALE GENOMIC DNA]</scope>
    <source>
        <strain>O157:H7 / Sakai / RIMD 0509952 / EHEC</strain>
    </source>
</reference>
<feature type="chain" id="PRO_0000193998" description="UPF0057 membrane protein YqaE">
    <location>
        <begin position="1"/>
        <end position="52"/>
    </location>
</feature>
<feature type="transmembrane region" description="Helical" evidence="1">
    <location>
        <begin position="1"/>
        <end position="21"/>
    </location>
</feature>
<feature type="transmembrane region" description="Helical" evidence="1">
    <location>
        <begin position="23"/>
        <end position="43"/>
    </location>
</feature>
<evidence type="ECO:0000255" key="1"/>
<evidence type="ECO:0000305" key="2"/>
<gene>
    <name type="primary">yqaE</name>
    <name type="ordered locus">Z3965</name>
    <name type="ordered locus">ECs3527</name>
</gene>
<accession>P0AE44</accession>
<accession>P77240</accession>
<dbReference type="EMBL" id="AE005174">
    <property type="protein sequence ID" value="AAG57774.1"/>
    <property type="molecule type" value="Genomic_DNA"/>
</dbReference>
<dbReference type="EMBL" id="BA000007">
    <property type="protein sequence ID" value="BAB36950.1"/>
    <property type="molecule type" value="Genomic_DNA"/>
</dbReference>
<dbReference type="PIR" id="B85914">
    <property type="entry name" value="B85914"/>
</dbReference>
<dbReference type="PIR" id="G91069">
    <property type="entry name" value="G91069"/>
</dbReference>
<dbReference type="RefSeq" id="NP_311554.1">
    <property type="nucleotide sequence ID" value="NC_002695.1"/>
</dbReference>
<dbReference type="RefSeq" id="WP_000508177.1">
    <property type="nucleotide sequence ID" value="NZ_VOAI01000003.1"/>
</dbReference>
<dbReference type="SMR" id="P0AE44"/>
<dbReference type="STRING" id="155864.Z3965"/>
<dbReference type="GeneID" id="914757"/>
<dbReference type="KEGG" id="ece:Z3965"/>
<dbReference type="KEGG" id="ecs:ECs_3527"/>
<dbReference type="PATRIC" id="fig|386585.9.peg.3681"/>
<dbReference type="eggNOG" id="COG0401">
    <property type="taxonomic scope" value="Bacteria"/>
</dbReference>
<dbReference type="HOGENOM" id="CLU_107649_7_1_6"/>
<dbReference type="OMA" id="VHAIWVI"/>
<dbReference type="Proteomes" id="UP000000558">
    <property type="component" value="Chromosome"/>
</dbReference>
<dbReference type="Proteomes" id="UP000002519">
    <property type="component" value="Chromosome"/>
</dbReference>
<dbReference type="GO" id="GO:0005886">
    <property type="term" value="C:plasma membrane"/>
    <property type="evidence" value="ECO:0007669"/>
    <property type="project" value="UniProtKB-SubCell"/>
</dbReference>
<dbReference type="InterPro" id="IPR000612">
    <property type="entry name" value="PMP3"/>
</dbReference>
<dbReference type="PANTHER" id="PTHR21659">
    <property type="entry name" value="HYDROPHOBIC PROTEIN RCI2 LOW TEMPERATURE AND SALT RESPONSIVE PROTEIN LTI6 -RELATED"/>
    <property type="match status" value="1"/>
</dbReference>
<dbReference type="PANTHER" id="PTHR21659:SF42">
    <property type="entry name" value="UPF0057 MEMBRANE PROTEIN ZK632.10-RELATED"/>
    <property type="match status" value="1"/>
</dbReference>
<dbReference type="Pfam" id="PF01679">
    <property type="entry name" value="Pmp3"/>
    <property type="match status" value="1"/>
</dbReference>
<dbReference type="PROSITE" id="PS01309">
    <property type="entry name" value="UPF0057"/>
    <property type="match status" value="1"/>
</dbReference>
<name>YQAE_ECO57</name>
<proteinExistence type="inferred from homology"/>
<comment type="subcellular location">
    <subcellularLocation>
        <location evidence="2">Cell membrane</location>
        <topology evidence="2">Multi-pass membrane protein</topology>
    </subcellularLocation>
</comment>
<comment type="similarity">
    <text evidence="2">Belongs to the UPF0057 (PMP3) family.</text>
</comment>
<keyword id="KW-1003">Cell membrane</keyword>
<keyword id="KW-0472">Membrane</keyword>
<keyword id="KW-1185">Reference proteome</keyword>
<keyword id="KW-0812">Transmembrane</keyword>
<keyword id="KW-1133">Transmembrane helix</keyword>
<protein>
    <recommendedName>
        <fullName>UPF0057 membrane protein YqaE</fullName>
    </recommendedName>
</protein>
<organism>
    <name type="scientific">Escherichia coli O157:H7</name>
    <dbReference type="NCBI Taxonomy" id="83334"/>
    <lineage>
        <taxon>Bacteria</taxon>
        <taxon>Pseudomonadati</taxon>
        <taxon>Pseudomonadota</taxon>
        <taxon>Gammaproteobacteria</taxon>
        <taxon>Enterobacterales</taxon>
        <taxon>Enterobacteriaceae</taxon>
        <taxon>Escherichia</taxon>
    </lineage>
</organism>
<sequence>MGFWRIVITIILPPLGVLLGKGFGWAFIINILLTLLGYIPGLIHAFWVQTRD</sequence>